<name>IHFB_ALIF1</name>
<sequence>MTKSELIEQLCSKKPQLSAKQVEDTVKEILEQMATTLEGGDRIEIRGFGSFSLHYREPRLGRNPKTGDKVELDGKFVPHFKPGKELRERVNYS</sequence>
<keyword id="KW-0233">DNA recombination</keyword>
<keyword id="KW-0238">DNA-binding</keyword>
<keyword id="KW-1185">Reference proteome</keyword>
<keyword id="KW-0804">Transcription</keyword>
<keyword id="KW-0805">Transcription regulation</keyword>
<keyword id="KW-0810">Translation regulation</keyword>
<organism>
    <name type="scientific">Aliivibrio fischeri (strain ATCC 700601 / ES114)</name>
    <name type="common">Vibrio fischeri</name>
    <dbReference type="NCBI Taxonomy" id="312309"/>
    <lineage>
        <taxon>Bacteria</taxon>
        <taxon>Pseudomonadati</taxon>
        <taxon>Pseudomonadota</taxon>
        <taxon>Gammaproteobacteria</taxon>
        <taxon>Vibrionales</taxon>
        <taxon>Vibrionaceae</taxon>
        <taxon>Aliivibrio</taxon>
    </lineage>
</organism>
<feature type="chain" id="PRO_1000060673" description="Integration host factor subunit beta">
    <location>
        <begin position="1"/>
        <end position="93"/>
    </location>
</feature>
<reference key="1">
    <citation type="journal article" date="2005" name="Proc. Natl. Acad. Sci. U.S.A.">
        <title>Complete genome sequence of Vibrio fischeri: a symbiotic bacterium with pathogenic congeners.</title>
        <authorList>
            <person name="Ruby E.G."/>
            <person name="Urbanowski M."/>
            <person name="Campbell J."/>
            <person name="Dunn A."/>
            <person name="Faini M."/>
            <person name="Gunsalus R."/>
            <person name="Lostroh P."/>
            <person name="Lupp C."/>
            <person name="McCann J."/>
            <person name="Millikan D."/>
            <person name="Schaefer A."/>
            <person name="Stabb E."/>
            <person name="Stevens A."/>
            <person name="Visick K."/>
            <person name="Whistler C."/>
            <person name="Greenberg E.P."/>
        </authorList>
    </citation>
    <scope>NUCLEOTIDE SEQUENCE [LARGE SCALE GENOMIC DNA]</scope>
    <source>
        <strain>ATCC 700601 / ES114</strain>
    </source>
</reference>
<comment type="function">
    <text evidence="1">This protein is one of the two subunits of integration host factor, a specific DNA-binding protein that functions in genetic recombination as well as in transcriptional and translational control.</text>
</comment>
<comment type="subunit">
    <text evidence="1">Heterodimer of an alpha and a beta chain.</text>
</comment>
<comment type="similarity">
    <text evidence="1">Belongs to the bacterial histone-like protein family.</text>
</comment>
<gene>
    <name evidence="1" type="primary">ihfB</name>
    <name evidence="1" type="synonym">himD</name>
    <name type="ordered locus">VF_1758</name>
</gene>
<accession>Q5E3Z3</accession>
<dbReference type="EMBL" id="CP000020">
    <property type="protein sequence ID" value="AAW86253.1"/>
    <property type="molecule type" value="Genomic_DNA"/>
</dbReference>
<dbReference type="RefSeq" id="WP_005420161.1">
    <property type="nucleotide sequence ID" value="NZ_CAWLES010000001.1"/>
</dbReference>
<dbReference type="RefSeq" id="YP_205141.1">
    <property type="nucleotide sequence ID" value="NC_006840.2"/>
</dbReference>
<dbReference type="SMR" id="Q5E3Z3"/>
<dbReference type="STRING" id="312309.VF_1758"/>
<dbReference type="EnsemblBacteria" id="AAW86253">
    <property type="protein sequence ID" value="AAW86253"/>
    <property type="gene ID" value="VF_1758"/>
</dbReference>
<dbReference type="GeneID" id="54164457"/>
<dbReference type="KEGG" id="vfi:VF_1758"/>
<dbReference type="PATRIC" id="fig|312309.11.peg.1784"/>
<dbReference type="eggNOG" id="COG0776">
    <property type="taxonomic scope" value="Bacteria"/>
</dbReference>
<dbReference type="HOGENOM" id="CLU_105066_2_0_6"/>
<dbReference type="OrthoDB" id="9804203at2"/>
<dbReference type="Proteomes" id="UP000000537">
    <property type="component" value="Chromosome I"/>
</dbReference>
<dbReference type="GO" id="GO:0005694">
    <property type="term" value="C:chromosome"/>
    <property type="evidence" value="ECO:0007669"/>
    <property type="project" value="InterPro"/>
</dbReference>
<dbReference type="GO" id="GO:0005829">
    <property type="term" value="C:cytosol"/>
    <property type="evidence" value="ECO:0007669"/>
    <property type="project" value="TreeGrafter"/>
</dbReference>
<dbReference type="GO" id="GO:0003677">
    <property type="term" value="F:DNA binding"/>
    <property type="evidence" value="ECO:0007669"/>
    <property type="project" value="UniProtKB-UniRule"/>
</dbReference>
<dbReference type="GO" id="GO:0030527">
    <property type="term" value="F:structural constituent of chromatin"/>
    <property type="evidence" value="ECO:0007669"/>
    <property type="project" value="InterPro"/>
</dbReference>
<dbReference type="GO" id="GO:0006310">
    <property type="term" value="P:DNA recombination"/>
    <property type="evidence" value="ECO:0007669"/>
    <property type="project" value="UniProtKB-UniRule"/>
</dbReference>
<dbReference type="GO" id="GO:0006355">
    <property type="term" value="P:regulation of DNA-templated transcription"/>
    <property type="evidence" value="ECO:0007669"/>
    <property type="project" value="UniProtKB-UniRule"/>
</dbReference>
<dbReference type="GO" id="GO:0006417">
    <property type="term" value="P:regulation of translation"/>
    <property type="evidence" value="ECO:0007669"/>
    <property type="project" value="UniProtKB-UniRule"/>
</dbReference>
<dbReference type="CDD" id="cd13836">
    <property type="entry name" value="IHF_B"/>
    <property type="match status" value="1"/>
</dbReference>
<dbReference type="FunFam" id="4.10.520.10:FF:000003">
    <property type="entry name" value="Integration host factor subunit beta"/>
    <property type="match status" value="1"/>
</dbReference>
<dbReference type="Gene3D" id="4.10.520.10">
    <property type="entry name" value="IHF-like DNA-binding proteins"/>
    <property type="match status" value="1"/>
</dbReference>
<dbReference type="HAMAP" id="MF_00381">
    <property type="entry name" value="IHF_beta"/>
    <property type="match status" value="1"/>
</dbReference>
<dbReference type="InterPro" id="IPR000119">
    <property type="entry name" value="Hist_DNA-bd"/>
</dbReference>
<dbReference type="InterPro" id="IPR020816">
    <property type="entry name" value="Histone-like_DNA-bd_CS"/>
</dbReference>
<dbReference type="InterPro" id="IPR010992">
    <property type="entry name" value="IHF-like_DNA-bd_dom_sf"/>
</dbReference>
<dbReference type="InterPro" id="IPR005685">
    <property type="entry name" value="IHF_beta"/>
</dbReference>
<dbReference type="NCBIfam" id="TIGR00988">
    <property type="entry name" value="hip"/>
    <property type="match status" value="1"/>
</dbReference>
<dbReference type="NCBIfam" id="NF001222">
    <property type="entry name" value="PRK00199.1"/>
    <property type="match status" value="1"/>
</dbReference>
<dbReference type="PANTHER" id="PTHR33175">
    <property type="entry name" value="DNA-BINDING PROTEIN HU"/>
    <property type="match status" value="1"/>
</dbReference>
<dbReference type="PANTHER" id="PTHR33175:SF5">
    <property type="entry name" value="INTEGRATION HOST FACTOR SUBUNIT BETA"/>
    <property type="match status" value="1"/>
</dbReference>
<dbReference type="Pfam" id="PF00216">
    <property type="entry name" value="Bac_DNA_binding"/>
    <property type="match status" value="1"/>
</dbReference>
<dbReference type="PRINTS" id="PR01727">
    <property type="entry name" value="DNABINDINGHU"/>
</dbReference>
<dbReference type="SMART" id="SM00411">
    <property type="entry name" value="BHL"/>
    <property type="match status" value="1"/>
</dbReference>
<dbReference type="SUPFAM" id="SSF47729">
    <property type="entry name" value="IHF-like DNA-binding proteins"/>
    <property type="match status" value="1"/>
</dbReference>
<dbReference type="PROSITE" id="PS00045">
    <property type="entry name" value="HISTONE_LIKE"/>
    <property type="match status" value="1"/>
</dbReference>
<evidence type="ECO:0000255" key="1">
    <source>
        <dbReference type="HAMAP-Rule" id="MF_00381"/>
    </source>
</evidence>
<protein>
    <recommendedName>
        <fullName evidence="1">Integration host factor subunit beta</fullName>
        <shortName evidence="1">IHF-beta</shortName>
    </recommendedName>
</protein>
<proteinExistence type="inferred from homology"/>